<sequence>MSALETQNLGMVPVVIEQSGRGERAYDIYSRLLRERVIFLVGPVNDQTANLVVAQLLFLESENPDKDISLYINSPGGSVSAGLSIFDTMQFIKPDVSTLCMGIAASMGAFLLAAGAKGKRFALPNSRVMIHQPSGGAQGQATDIEIQAREILKLRESLNGILAERTGQPLEKIRADSERDYFMSAEEATGYGLIDKVIAQRA</sequence>
<gene>
    <name evidence="1" type="primary">clpP</name>
    <name type="ordered locus">Mpe_A1292</name>
</gene>
<proteinExistence type="inferred from homology"/>
<keyword id="KW-0963">Cytoplasm</keyword>
<keyword id="KW-0378">Hydrolase</keyword>
<keyword id="KW-0645">Protease</keyword>
<keyword id="KW-1185">Reference proteome</keyword>
<keyword id="KW-0720">Serine protease</keyword>
<organism>
    <name type="scientific">Methylibium petroleiphilum (strain ATCC BAA-1232 / LMG 22953 / PM1)</name>
    <dbReference type="NCBI Taxonomy" id="420662"/>
    <lineage>
        <taxon>Bacteria</taxon>
        <taxon>Pseudomonadati</taxon>
        <taxon>Pseudomonadota</taxon>
        <taxon>Betaproteobacteria</taxon>
        <taxon>Burkholderiales</taxon>
        <taxon>Sphaerotilaceae</taxon>
        <taxon>Methylibium</taxon>
    </lineage>
</organism>
<reference key="1">
    <citation type="journal article" date="2007" name="J. Bacteriol.">
        <title>Whole-genome analysis of the methyl tert-butyl ether-degrading beta-proteobacterium Methylibium petroleiphilum PM1.</title>
        <authorList>
            <person name="Kane S.R."/>
            <person name="Chakicherla A.Y."/>
            <person name="Chain P.S.G."/>
            <person name="Schmidt R."/>
            <person name="Shin M.W."/>
            <person name="Legler T.C."/>
            <person name="Scow K.M."/>
            <person name="Larimer F.W."/>
            <person name="Lucas S.M."/>
            <person name="Richardson P.M."/>
            <person name="Hristova K.R."/>
        </authorList>
    </citation>
    <scope>NUCLEOTIDE SEQUENCE [LARGE SCALE GENOMIC DNA]</scope>
    <source>
        <strain>ATCC BAA-1232 / LMG 22953 / PM1</strain>
    </source>
</reference>
<comment type="function">
    <text evidence="1">Cleaves peptides in various proteins in a process that requires ATP hydrolysis. Has a chymotrypsin-like activity. Plays a major role in the degradation of misfolded proteins.</text>
</comment>
<comment type="catalytic activity">
    <reaction evidence="1">
        <text>Hydrolysis of proteins to small peptides in the presence of ATP and magnesium. alpha-casein is the usual test substrate. In the absence of ATP, only oligopeptides shorter than five residues are hydrolyzed (such as succinyl-Leu-Tyr-|-NHMec, and Leu-Tyr-Leu-|-Tyr-Trp, in which cleavage of the -Tyr-|-Leu- and -Tyr-|-Trp bonds also occurs).</text>
        <dbReference type="EC" id="3.4.21.92"/>
    </reaction>
</comment>
<comment type="subunit">
    <text evidence="1">Fourteen ClpP subunits assemble into 2 heptameric rings which stack back to back to give a disk-like structure with a central cavity, resembling the structure of eukaryotic proteasomes.</text>
</comment>
<comment type="subcellular location">
    <subcellularLocation>
        <location evidence="1">Cytoplasm</location>
    </subcellularLocation>
</comment>
<comment type="similarity">
    <text evidence="1">Belongs to the peptidase S14 family.</text>
</comment>
<protein>
    <recommendedName>
        <fullName evidence="1">ATP-dependent Clp protease proteolytic subunit</fullName>
        <ecNumber evidence="1">3.4.21.92</ecNumber>
    </recommendedName>
    <alternativeName>
        <fullName evidence="1">Endopeptidase Clp</fullName>
    </alternativeName>
</protein>
<feature type="chain" id="PRO_1000080894" description="ATP-dependent Clp protease proteolytic subunit">
    <location>
        <begin position="1"/>
        <end position="202"/>
    </location>
</feature>
<feature type="active site" description="Nucleophile" evidence="1">
    <location>
        <position position="106"/>
    </location>
</feature>
<feature type="active site" evidence="1">
    <location>
        <position position="131"/>
    </location>
</feature>
<dbReference type="EC" id="3.4.21.92" evidence="1"/>
<dbReference type="EMBL" id="CP000555">
    <property type="protein sequence ID" value="ABM94254.1"/>
    <property type="molecule type" value="Genomic_DNA"/>
</dbReference>
<dbReference type="RefSeq" id="WP_011828891.1">
    <property type="nucleotide sequence ID" value="NC_008825.1"/>
</dbReference>
<dbReference type="SMR" id="A2SFB5"/>
<dbReference type="STRING" id="420662.Mpe_A1292"/>
<dbReference type="MEROPS" id="S14.001"/>
<dbReference type="KEGG" id="mpt:Mpe_A1292"/>
<dbReference type="eggNOG" id="COG0740">
    <property type="taxonomic scope" value="Bacteria"/>
</dbReference>
<dbReference type="HOGENOM" id="CLU_058707_3_2_4"/>
<dbReference type="Proteomes" id="UP000000366">
    <property type="component" value="Chromosome"/>
</dbReference>
<dbReference type="GO" id="GO:0005737">
    <property type="term" value="C:cytoplasm"/>
    <property type="evidence" value="ECO:0007669"/>
    <property type="project" value="UniProtKB-SubCell"/>
</dbReference>
<dbReference type="GO" id="GO:0009368">
    <property type="term" value="C:endopeptidase Clp complex"/>
    <property type="evidence" value="ECO:0007669"/>
    <property type="project" value="TreeGrafter"/>
</dbReference>
<dbReference type="GO" id="GO:0004176">
    <property type="term" value="F:ATP-dependent peptidase activity"/>
    <property type="evidence" value="ECO:0007669"/>
    <property type="project" value="InterPro"/>
</dbReference>
<dbReference type="GO" id="GO:0051117">
    <property type="term" value="F:ATPase binding"/>
    <property type="evidence" value="ECO:0007669"/>
    <property type="project" value="TreeGrafter"/>
</dbReference>
<dbReference type="GO" id="GO:0004252">
    <property type="term" value="F:serine-type endopeptidase activity"/>
    <property type="evidence" value="ECO:0007669"/>
    <property type="project" value="UniProtKB-UniRule"/>
</dbReference>
<dbReference type="GO" id="GO:0006515">
    <property type="term" value="P:protein quality control for misfolded or incompletely synthesized proteins"/>
    <property type="evidence" value="ECO:0007669"/>
    <property type="project" value="TreeGrafter"/>
</dbReference>
<dbReference type="CDD" id="cd07017">
    <property type="entry name" value="S14_ClpP_2"/>
    <property type="match status" value="1"/>
</dbReference>
<dbReference type="FunFam" id="3.90.226.10:FF:000001">
    <property type="entry name" value="ATP-dependent Clp protease proteolytic subunit"/>
    <property type="match status" value="1"/>
</dbReference>
<dbReference type="Gene3D" id="3.90.226.10">
    <property type="entry name" value="2-enoyl-CoA Hydratase, Chain A, domain 1"/>
    <property type="match status" value="1"/>
</dbReference>
<dbReference type="HAMAP" id="MF_00444">
    <property type="entry name" value="ClpP"/>
    <property type="match status" value="1"/>
</dbReference>
<dbReference type="InterPro" id="IPR001907">
    <property type="entry name" value="ClpP"/>
</dbReference>
<dbReference type="InterPro" id="IPR029045">
    <property type="entry name" value="ClpP/crotonase-like_dom_sf"/>
</dbReference>
<dbReference type="InterPro" id="IPR023562">
    <property type="entry name" value="ClpP/TepA"/>
</dbReference>
<dbReference type="InterPro" id="IPR033135">
    <property type="entry name" value="ClpP_His_AS"/>
</dbReference>
<dbReference type="InterPro" id="IPR018215">
    <property type="entry name" value="ClpP_Ser_AS"/>
</dbReference>
<dbReference type="NCBIfam" id="TIGR00493">
    <property type="entry name" value="clpP"/>
    <property type="match status" value="1"/>
</dbReference>
<dbReference type="NCBIfam" id="NF001368">
    <property type="entry name" value="PRK00277.1"/>
    <property type="match status" value="1"/>
</dbReference>
<dbReference type="NCBIfam" id="NF009205">
    <property type="entry name" value="PRK12553.1"/>
    <property type="match status" value="1"/>
</dbReference>
<dbReference type="PANTHER" id="PTHR10381">
    <property type="entry name" value="ATP-DEPENDENT CLP PROTEASE PROTEOLYTIC SUBUNIT"/>
    <property type="match status" value="1"/>
</dbReference>
<dbReference type="PANTHER" id="PTHR10381:SF11">
    <property type="entry name" value="ATP-DEPENDENT CLP PROTEASE PROTEOLYTIC SUBUNIT, MITOCHONDRIAL"/>
    <property type="match status" value="1"/>
</dbReference>
<dbReference type="Pfam" id="PF00574">
    <property type="entry name" value="CLP_protease"/>
    <property type="match status" value="1"/>
</dbReference>
<dbReference type="PRINTS" id="PR00127">
    <property type="entry name" value="CLPPROTEASEP"/>
</dbReference>
<dbReference type="SUPFAM" id="SSF52096">
    <property type="entry name" value="ClpP/crotonase"/>
    <property type="match status" value="1"/>
</dbReference>
<dbReference type="PROSITE" id="PS00382">
    <property type="entry name" value="CLP_PROTEASE_HIS"/>
    <property type="match status" value="1"/>
</dbReference>
<dbReference type="PROSITE" id="PS00381">
    <property type="entry name" value="CLP_PROTEASE_SER"/>
    <property type="match status" value="1"/>
</dbReference>
<accession>A2SFB5</accession>
<evidence type="ECO:0000255" key="1">
    <source>
        <dbReference type="HAMAP-Rule" id="MF_00444"/>
    </source>
</evidence>
<name>CLPP_METPP</name>